<protein>
    <recommendedName>
        <fullName evidence="1">Glycine cleavage system H protein</fullName>
    </recommendedName>
    <alternativeName>
        <fullName evidence="1">Octanoyl/lipoyl carrier protein</fullName>
    </alternativeName>
</protein>
<name>GCSH_GEOKA</name>
<organism>
    <name type="scientific">Geobacillus kaustophilus (strain HTA426)</name>
    <dbReference type="NCBI Taxonomy" id="235909"/>
    <lineage>
        <taxon>Bacteria</taxon>
        <taxon>Bacillati</taxon>
        <taxon>Bacillota</taxon>
        <taxon>Bacilli</taxon>
        <taxon>Bacillales</taxon>
        <taxon>Anoxybacillaceae</taxon>
        <taxon>Geobacillus</taxon>
        <taxon>Geobacillus thermoleovorans group</taxon>
    </lineage>
</organism>
<keyword id="KW-0450">Lipoyl</keyword>
<keyword id="KW-1185">Reference proteome</keyword>
<reference key="1">
    <citation type="journal article" date="2004" name="Nucleic Acids Res.">
        <title>Thermoadaptation trait revealed by the genome sequence of thermophilic Geobacillus kaustophilus.</title>
        <authorList>
            <person name="Takami H."/>
            <person name="Takaki Y."/>
            <person name="Chee G.-J."/>
            <person name="Nishi S."/>
            <person name="Shimamura S."/>
            <person name="Suzuki H."/>
            <person name="Matsui S."/>
            <person name="Uchiyama I."/>
        </authorList>
    </citation>
    <scope>NUCLEOTIDE SEQUENCE [LARGE SCALE GENOMIC DNA]</scope>
    <source>
        <strain>HTA426</strain>
    </source>
</reference>
<dbReference type="EMBL" id="BA000043">
    <property type="protein sequence ID" value="BAD77289.1"/>
    <property type="molecule type" value="Genomic_DNA"/>
</dbReference>
<dbReference type="RefSeq" id="WP_011232474.1">
    <property type="nucleotide sequence ID" value="NC_006510.1"/>
</dbReference>
<dbReference type="SMR" id="Q5KVJ7"/>
<dbReference type="STRING" id="235909.GK3004"/>
<dbReference type="GeneID" id="32064883"/>
<dbReference type="KEGG" id="gka:GK3004"/>
<dbReference type="eggNOG" id="COG0509">
    <property type="taxonomic scope" value="Bacteria"/>
</dbReference>
<dbReference type="HOGENOM" id="CLU_097408_2_2_9"/>
<dbReference type="Proteomes" id="UP000001172">
    <property type="component" value="Chromosome"/>
</dbReference>
<dbReference type="GO" id="GO:0005829">
    <property type="term" value="C:cytosol"/>
    <property type="evidence" value="ECO:0007669"/>
    <property type="project" value="TreeGrafter"/>
</dbReference>
<dbReference type="GO" id="GO:0005960">
    <property type="term" value="C:glycine cleavage complex"/>
    <property type="evidence" value="ECO:0007669"/>
    <property type="project" value="InterPro"/>
</dbReference>
<dbReference type="GO" id="GO:0019464">
    <property type="term" value="P:glycine decarboxylation via glycine cleavage system"/>
    <property type="evidence" value="ECO:0007669"/>
    <property type="project" value="UniProtKB-UniRule"/>
</dbReference>
<dbReference type="CDD" id="cd06848">
    <property type="entry name" value="GCS_H"/>
    <property type="match status" value="1"/>
</dbReference>
<dbReference type="Gene3D" id="2.40.50.100">
    <property type="match status" value="1"/>
</dbReference>
<dbReference type="HAMAP" id="MF_00272">
    <property type="entry name" value="GcvH"/>
    <property type="match status" value="1"/>
</dbReference>
<dbReference type="InterPro" id="IPR003016">
    <property type="entry name" value="2-oxoA_DH_lipoyl-BS"/>
</dbReference>
<dbReference type="InterPro" id="IPR000089">
    <property type="entry name" value="Biotin_lipoyl"/>
</dbReference>
<dbReference type="InterPro" id="IPR002930">
    <property type="entry name" value="GCV_H"/>
</dbReference>
<dbReference type="InterPro" id="IPR033753">
    <property type="entry name" value="GCV_H/Fam206"/>
</dbReference>
<dbReference type="InterPro" id="IPR017453">
    <property type="entry name" value="GCV_H_sub"/>
</dbReference>
<dbReference type="InterPro" id="IPR011053">
    <property type="entry name" value="Single_hybrid_motif"/>
</dbReference>
<dbReference type="NCBIfam" id="TIGR00527">
    <property type="entry name" value="gcvH"/>
    <property type="match status" value="1"/>
</dbReference>
<dbReference type="NCBIfam" id="NF002270">
    <property type="entry name" value="PRK01202.1"/>
    <property type="match status" value="1"/>
</dbReference>
<dbReference type="PANTHER" id="PTHR11715">
    <property type="entry name" value="GLYCINE CLEAVAGE SYSTEM H PROTEIN"/>
    <property type="match status" value="1"/>
</dbReference>
<dbReference type="PANTHER" id="PTHR11715:SF3">
    <property type="entry name" value="GLYCINE CLEAVAGE SYSTEM H PROTEIN-RELATED"/>
    <property type="match status" value="1"/>
</dbReference>
<dbReference type="Pfam" id="PF01597">
    <property type="entry name" value="GCV_H"/>
    <property type="match status" value="1"/>
</dbReference>
<dbReference type="SUPFAM" id="SSF51230">
    <property type="entry name" value="Single hybrid motif"/>
    <property type="match status" value="1"/>
</dbReference>
<dbReference type="PROSITE" id="PS50968">
    <property type="entry name" value="BIOTINYL_LIPOYL"/>
    <property type="match status" value="1"/>
</dbReference>
<dbReference type="PROSITE" id="PS00189">
    <property type="entry name" value="LIPOYL"/>
    <property type="match status" value="1"/>
</dbReference>
<sequence>MNTPKELRYTKEHEWVRVEGENVRIGITDYAQSELGDIVFVELPEVGAEVTANEPFGSVESVKTVSELYAPISGTVVEVNEALNDHPEYVNESPYDKAWMIVVKPNDLSEIDNLLTAEQYEAMINEG</sequence>
<feature type="chain" id="PRO_0000302377" description="Glycine cleavage system H protein">
    <location>
        <begin position="1"/>
        <end position="127"/>
    </location>
</feature>
<feature type="domain" description="Lipoyl-binding" evidence="2">
    <location>
        <begin position="22"/>
        <end position="104"/>
    </location>
</feature>
<feature type="modified residue" description="N6-lipoyllysine" evidence="1">
    <location>
        <position position="63"/>
    </location>
</feature>
<accession>Q5KVJ7</accession>
<comment type="function">
    <text evidence="1">The glycine cleavage system catalyzes the degradation of glycine. The H protein shuttles the methylamine group of glycine from the P protein to the T protein.</text>
</comment>
<comment type="function">
    <text evidence="1">Is also involved in protein lipoylation via its role as an octanoyl/lipoyl carrier protein intermediate.</text>
</comment>
<comment type="cofactor">
    <cofactor evidence="1">
        <name>(R)-lipoate</name>
        <dbReference type="ChEBI" id="CHEBI:83088"/>
    </cofactor>
    <text evidence="1">Binds 1 lipoyl cofactor covalently.</text>
</comment>
<comment type="subunit">
    <text evidence="1">The glycine cleavage system is composed of four proteins: P, T, L and H.</text>
</comment>
<comment type="similarity">
    <text evidence="1">Belongs to the GcvH family.</text>
</comment>
<gene>
    <name evidence="1" type="primary">gcvH</name>
    <name type="ordered locus">GK3004</name>
</gene>
<evidence type="ECO:0000255" key="1">
    <source>
        <dbReference type="HAMAP-Rule" id="MF_00272"/>
    </source>
</evidence>
<evidence type="ECO:0000255" key="2">
    <source>
        <dbReference type="PROSITE-ProRule" id="PRU01066"/>
    </source>
</evidence>
<proteinExistence type="inferred from homology"/>